<name>BAMB_FRATT</name>
<keyword id="KW-0998">Cell outer membrane</keyword>
<keyword id="KW-0449">Lipoprotein</keyword>
<keyword id="KW-0472">Membrane</keyword>
<keyword id="KW-0564">Palmitate</keyword>
<keyword id="KW-1185">Reference proteome</keyword>
<keyword id="KW-0732">Signal</keyword>
<reference key="1">
    <citation type="journal article" date="2005" name="Nat. Genet.">
        <title>The complete genome sequence of Francisella tularensis, the causative agent of tularemia.</title>
        <authorList>
            <person name="Larsson P."/>
            <person name="Oyston P.C.F."/>
            <person name="Chain P."/>
            <person name="Chu M.C."/>
            <person name="Duffield M."/>
            <person name="Fuxelius H.-H."/>
            <person name="Garcia E."/>
            <person name="Haelltorp G."/>
            <person name="Johansson D."/>
            <person name="Isherwood K.E."/>
            <person name="Karp P.D."/>
            <person name="Larsson E."/>
            <person name="Liu Y."/>
            <person name="Michell S."/>
            <person name="Prior J."/>
            <person name="Prior R."/>
            <person name="Malfatti S."/>
            <person name="Sjoestedt A."/>
            <person name="Svensson K."/>
            <person name="Thompson N."/>
            <person name="Vergez L."/>
            <person name="Wagg J.K."/>
            <person name="Wren B.W."/>
            <person name="Lindler L.E."/>
            <person name="Andersson S.G.E."/>
            <person name="Forsman M."/>
            <person name="Titball R.W."/>
        </authorList>
    </citation>
    <scope>NUCLEOTIDE SEQUENCE [LARGE SCALE GENOMIC DNA]</scope>
    <source>
        <strain>SCHU S4 / Schu 4</strain>
    </source>
</reference>
<protein>
    <recommendedName>
        <fullName evidence="1">Outer membrane protein assembly factor BamB</fullName>
    </recommendedName>
</protein>
<comment type="function">
    <text evidence="1">Part of the outer membrane protein assembly complex, which is involved in assembly and insertion of beta-barrel proteins into the outer membrane.</text>
</comment>
<comment type="subunit">
    <text evidence="1">Part of the Bam complex.</text>
</comment>
<comment type="subcellular location">
    <subcellularLocation>
        <location evidence="1">Cell outer membrane</location>
        <topology evidence="1">Lipid-anchor</topology>
    </subcellularLocation>
</comment>
<comment type="similarity">
    <text evidence="1">Belongs to the BamB family.</text>
</comment>
<proteinExistence type="inferred from homology"/>
<accession>Q5NIB1</accession>
<evidence type="ECO:0000255" key="1">
    <source>
        <dbReference type="HAMAP-Rule" id="MF_00923"/>
    </source>
</evidence>
<dbReference type="EMBL" id="AJ749949">
    <property type="protein sequence ID" value="CAG44798.1"/>
    <property type="molecule type" value="Genomic_DNA"/>
</dbReference>
<dbReference type="RefSeq" id="WP_003019949.1">
    <property type="nucleotide sequence ID" value="NC_006570.2"/>
</dbReference>
<dbReference type="RefSeq" id="YP_169231.1">
    <property type="nucleotide sequence ID" value="NC_006570.2"/>
</dbReference>
<dbReference type="SMR" id="Q5NIB1"/>
<dbReference type="IntAct" id="Q5NIB1">
    <property type="interactions" value="4"/>
</dbReference>
<dbReference type="STRING" id="177416.FTT_0165c"/>
<dbReference type="DNASU" id="3192524"/>
<dbReference type="EnsemblBacteria" id="CAG44798">
    <property type="protein sequence ID" value="CAG44798"/>
    <property type="gene ID" value="FTT_0165c"/>
</dbReference>
<dbReference type="KEGG" id="ftu:FTT_0165c"/>
<dbReference type="eggNOG" id="COG1520">
    <property type="taxonomic scope" value="Bacteria"/>
</dbReference>
<dbReference type="OrthoDB" id="5173551at2"/>
<dbReference type="Proteomes" id="UP000001174">
    <property type="component" value="Chromosome"/>
</dbReference>
<dbReference type="GO" id="GO:0009279">
    <property type="term" value="C:cell outer membrane"/>
    <property type="evidence" value="ECO:0007669"/>
    <property type="project" value="UniProtKB-SubCell"/>
</dbReference>
<dbReference type="GO" id="GO:0043165">
    <property type="term" value="P:Gram-negative-bacterium-type cell outer membrane assembly"/>
    <property type="evidence" value="ECO:0007669"/>
    <property type="project" value="UniProtKB-UniRule"/>
</dbReference>
<dbReference type="GO" id="GO:0051205">
    <property type="term" value="P:protein insertion into membrane"/>
    <property type="evidence" value="ECO:0007669"/>
    <property type="project" value="UniProtKB-UniRule"/>
</dbReference>
<dbReference type="Gene3D" id="2.130.10.10">
    <property type="entry name" value="YVTN repeat-like/Quinoprotein amine dehydrogenase"/>
    <property type="match status" value="1"/>
</dbReference>
<dbReference type="HAMAP" id="MF_00923">
    <property type="entry name" value="OM_assembly_BamB"/>
    <property type="match status" value="1"/>
</dbReference>
<dbReference type="InterPro" id="IPR017687">
    <property type="entry name" value="BamB"/>
</dbReference>
<dbReference type="InterPro" id="IPR018391">
    <property type="entry name" value="PQQ_b-propeller_rpt"/>
</dbReference>
<dbReference type="InterPro" id="IPR002372">
    <property type="entry name" value="PQQ_rpt_dom"/>
</dbReference>
<dbReference type="InterPro" id="IPR011047">
    <property type="entry name" value="Quinoprotein_ADH-like_sf"/>
</dbReference>
<dbReference type="InterPro" id="IPR015943">
    <property type="entry name" value="WD40/YVTN_repeat-like_dom_sf"/>
</dbReference>
<dbReference type="NCBIfam" id="TIGR03300">
    <property type="entry name" value="assembly_YfgL"/>
    <property type="match status" value="1"/>
</dbReference>
<dbReference type="PANTHER" id="PTHR34512">
    <property type="entry name" value="CELL SURFACE PROTEIN"/>
    <property type="match status" value="1"/>
</dbReference>
<dbReference type="PANTHER" id="PTHR34512:SF30">
    <property type="entry name" value="OUTER MEMBRANE PROTEIN ASSEMBLY FACTOR BAMB"/>
    <property type="match status" value="1"/>
</dbReference>
<dbReference type="Pfam" id="PF13360">
    <property type="entry name" value="PQQ_2"/>
    <property type="match status" value="1"/>
</dbReference>
<dbReference type="SMART" id="SM00564">
    <property type="entry name" value="PQQ"/>
    <property type="match status" value="7"/>
</dbReference>
<dbReference type="SUPFAM" id="SSF50998">
    <property type="entry name" value="Quinoprotein alcohol dehydrogenase-like"/>
    <property type="match status" value="1"/>
</dbReference>
<dbReference type="PROSITE" id="PS51257">
    <property type="entry name" value="PROKAR_LIPOPROTEIN"/>
    <property type="match status" value="1"/>
</dbReference>
<gene>
    <name evidence="1" type="primary">bamB</name>
    <name type="ordered locus">FTT_0165c</name>
</gene>
<feature type="signal peptide" evidence="1">
    <location>
        <begin position="1"/>
        <end position="19"/>
    </location>
</feature>
<feature type="chain" id="PRO_0000417680" description="Outer membrane protein assembly factor BamB">
    <location>
        <begin position="20"/>
        <end position="456"/>
    </location>
</feature>
<feature type="lipid moiety-binding region" description="N-palmitoyl cysteine" evidence="1">
    <location>
        <position position="20"/>
    </location>
</feature>
<feature type="lipid moiety-binding region" description="S-diacylglycerol cysteine" evidence="1">
    <location>
        <position position="20"/>
    </location>
</feature>
<organism>
    <name type="scientific">Francisella tularensis subsp. tularensis (strain SCHU S4 / Schu 4)</name>
    <dbReference type="NCBI Taxonomy" id="177416"/>
    <lineage>
        <taxon>Bacteria</taxon>
        <taxon>Pseudomonadati</taxon>
        <taxon>Pseudomonadota</taxon>
        <taxon>Gammaproteobacteria</taxon>
        <taxon>Thiotrichales</taxon>
        <taxon>Francisellaceae</taxon>
        <taxon>Francisella</taxon>
    </lineage>
</organism>
<sequence>MKKLLFITAPLLLSVLTASCSKSNVPPPTPLAEKPPRETFVKVIWKRKTGNGNGGLANYNVAPAYANDTVFVPNQNGMAYALAITNGKIIWKNDTGTNLSVQPNTIANAVIFGSIKGTLTAIDDKDGQTLWRTDAPSSIFSQPTIYDNSIYLQTHDGSVSAFDARNGSKEWSVANNIPEITLPSNSSPIILNNTVMIGNAFGAVLGFTIKSGDRTINIPIAISHGSSPADKMVDITANPMLYDHYLIFAAYQGAIVALDKDSGKMLWAKKASIINNMAINNGVIFTTQDDSELKAYNIQTGDTVWTQDTLKWRKITAPIYYKGLIVVADYQGYLHFFNSLNGEYLGRYKLTSKSDIFDYGISGQLVPTEKGIIIEADNGTTYLVDAYSNKVIYDSILSDYQVDKGKSVARIYPLEQDKPTKATAPLATKTTQTTETKSKGINATIIIGDFSKGKPS</sequence>